<gene>
    <name evidence="1" type="primary">bioC2</name>
    <name type="ordered locus">Ilyop_2721</name>
</gene>
<evidence type="ECO:0000255" key="1">
    <source>
        <dbReference type="HAMAP-Rule" id="MF_00835"/>
    </source>
</evidence>
<sequence length="259" mass="30192">MIDKKKVNRNFSKGAKTYDEYALIQRHMADKLGIFIEDSEEVFNILEIGCGTGIFSEKILNKFPNSNIDFLDISHDMIKNVKDKIGSKENLNFIVEDIEKYQPQKKYDLIFSNATFQWIQNKKGLFDHLDSFLKPGGLILFSTFGKDTYFELRESLKSIDPDLEYSQNFISLEDLKKVLDDKYKILAAEEERIKENYHCVMDFLKMIKGIGANSALSNSKPFTRDKFNRLEDEYRKNYCSGDSIEVTNHLIYMILGKNY</sequence>
<protein>
    <recommendedName>
        <fullName evidence="1">Malonyl-[acyl-carrier protein] O-methyltransferase 2</fullName>
        <shortName evidence="1">Malonyl-ACP O-methyltransferase 2</shortName>
        <ecNumber evidence="1">2.1.1.197</ecNumber>
    </recommendedName>
    <alternativeName>
        <fullName evidence="1">Biotin synthesis protein BioC 2</fullName>
    </alternativeName>
</protein>
<comment type="function">
    <text evidence="1">Converts the free carboxyl group of a malonyl-thioester to its methyl ester by transfer of a methyl group from S-adenosyl-L-methionine (SAM). It allows to synthesize pimeloyl-ACP via the fatty acid synthetic pathway.</text>
</comment>
<comment type="catalytic activity">
    <reaction evidence="1">
        <text>malonyl-[ACP] + S-adenosyl-L-methionine = malonyl-[ACP] methyl ester + S-adenosyl-L-homocysteine</text>
        <dbReference type="Rhea" id="RHEA:17105"/>
        <dbReference type="Rhea" id="RHEA-COMP:9623"/>
        <dbReference type="Rhea" id="RHEA-COMP:9954"/>
        <dbReference type="ChEBI" id="CHEBI:57856"/>
        <dbReference type="ChEBI" id="CHEBI:59789"/>
        <dbReference type="ChEBI" id="CHEBI:78449"/>
        <dbReference type="ChEBI" id="CHEBI:78845"/>
        <dbReference type="EC" id="2.1.1.197"/>
    </reaction>
</comment>
<comment type="pathway">
    <text evidence="1">Cofactor biosynthesis; biotin biosynthesis.</text>
</comment>
<comment type="similarity">
    <text evidence="1">Belongs to the methyltransferase superfamily.</text>
</comment>
<feature type="chain" id="PRO_0000412506" description="Malonyl-[acyl-carrier protein] O-methyltransferase 2">
    <location>
        <begin position="1"/>
        <end position="259"/>
    </location>
</feature>
<accession>E3HCT1</accession>
<dbReference type="EC" id="2.1.1.197" evidence="1"/>
<dbReference type="EMBL" id="CP002282">
    <property type="protein sequence ID" value="ADO84476.1"/>
    <property type="molecule type" value="Genomic_DNA"/>
</dbReference>
<dbReference type="RefSeq" id="WP_013389130.1">
    <property type="nucleotide sequence ID" value="NC_014633.1"/>
</dbReference>
<dbReference type="SMR" id="E3HCT1"/>
<dbReference type="KEGG" id="ipo:Ilyop_2721"/>
<dbReference type="HOGENOM" id="CLU_046586_2_3_0"/>
<dbReference type="OrthoDB" id="9760689at2"/>
<dbReference type="UniPathway" id="UPA00078"/>
<dbReference type="Proteomes" id="UP000006875">
    <property type="component" value="Plasmid pILYOP01"/>
</dbReference>
<dbReference type="GO" id="GO:0010340">
    <property type="term" value="F:carboxyl-O-methyltransferase activity"/>
    <property type="evidence" value="ECO:0007669"/>
    <property type="project" value="UniProtKB-UniRule"/>
</dbReference>
<dbReference type="GO" id="GO:0102130">
    <property type="term" value="F:malonyl-CoA methyltransferase activity"/>
    <property type="evidence" value="ECO:0007669"/>
    <property type="project" value="UniProtKB-EC"/>
</dbReference>
<dbReference type="GO" id="GO:0009102">
    <property type="term" value="P:biotin biosynthetic process"/>
    <property type="evidence" value="ECO:0007669"/>
    <property type="project" value="UniProtKB-UniRule"/>
</dbReference>
<dbReference type="GO" id="GO:0032259">
    <property type="term" value="P:methylation"/>
    <property type="evidence" value="ECO:0007669"/>
    <property type="project" value="UniProtKB-KW"/>
</dbReference>
<dbReference type="CDD" id="cd02440">
    <property type="entry name" value="AdoMet_MTases"/>
    <property type="match status" value="1"/>
</dbReference>
<dbReference type="Gene3D" id="3.40.50.150">
    <property type="entry name" value="Vaccinia Virus protein VP39"/>
    <property type="match status" value="1"/>
</dbReference>
<dbReference type="HAMAP" id="MF_00835">
    <property type="entry name" value="BioC"/>
    <property type="match status" value="1"/>
</dbReference>
<dbReference type="InterPro" id="IPR011814">
    <property type="entry name" value="BioC"/>
</dbReference>
<dbReference type="InterPro" id="IPR029063">
    <property type="entry name" value="SAM-dependent_MTases_sf"/>
</dbReference>
<dbReference type="NCBIfam" id="TIGR02072">
    <property type="entry name" value="BioC"/>
    <property type="match status" value="1"/>
</dbReference>
<dbReference type="PANTHER" id="PTHR43861">
    <property type="entry name" value="TRANS-ACONITATE 2-METHYLTRANSFERASE-RELATED"/>
    <property type="match status" value="1"/>
</dbReference>
<dbReference type="Pfam" id="PF13489">
    <property type="entry name" value="Methyltransf_23"/>
    <property type="match status" value="1"/>
</dbReference>
<dbReference type="SUPFAM" id="SSF53335">
    <property type="entry name" value="S-adenosyl-L-methionine-dependent methyltransferases"/>
    <property type="match status" value="1"/>
</dbReference>
<geneLocation type="plasmid">
    <name>pILYOP01</name>
</geneLocation>
<keyword id="KW-0093">Biotin biosynthesis</keyword>
<keyword id="KW-0489">Methyltransferase</keyword>
<keyword id="KW-0614">Plasmid</keyword>
<keyword id="KW-1185">Reference proteome</keyword>
<keyword id="KW-0949">S-adenosyl-L-methionine</keyword>
<keyword id="KW-0808">Transferase</keyword>
<organism>
    <name type="scientific">Ilyobacter polytropus (strain ATCC 51220 / DSM 2926 / LMG 16218 / CuHBu1)</name>
    <dbReference type="NCBI Taxonomy" id="572544"/>
    <lineage>
        <taxon>Bacteria</taxon>
        <taxon>Fusobacteriati</taxon>
        <taxon>Fusobacteriota</taxon>
        <taxon>Fusobacteriia</taxon>
        <taxon>Fusobacteriales</taxon>
        <taxon>Fusobacteriaceae</taxon>
        <taxon>Ilyobacter</taxon>
    </lineage>
</organism>
<proteinExistence type="inferred from homology"/>
<name>BIOC2_ILYPC</name>
<reference key="1">
    <citation type="journal article" date="2010" name="Stand. Genomic Sci.">
        <title>Complete genome sequence of Ilyobacter polytropus type strain (CuHbu1).</title>
        <authorList>
            <person name="Sikorski J."/>
            <person name="Chertkov O."/>
            <person name="Lapidus A."/>
            <person name="Nolan M."/>
            <person name="Lucas S."/>
            <person name="Del Rio T.G."/>
            <person name="Tice H."/>
            <person name="Cheng J.F."/>
            <person name="Tapia R."/>
            <person name="Han C."/>
            <person name="Goodwin L."/>
            <person name="Pitluck S."/>
            <person name="Liolios K."/>
            <person name="Ivanova N."/>
            <person name="Mavromatis K."/>
            <person name="Mikhailova N."/>
            <person name="Pati A."/>
            <person name="Chen A."/>
            <person name="Palaniappan K."/>
            <person name="Land M."/>
            <person name="Hauser L."/>
            <person name="Chang Y.J."/>
            <person name="Jeffries C.D."/>
            <person name="Brambilla E."/>
            <person name="Yasawong M."/>
            <person name="Rohde M."/>
            <person name="Pukall R."/>
            <person name="Spring S."/>
            <person name="Goker M."/>
            <person name="Woyke T."/>
            <person name="Bristow J."/>
            <person name="Eisen J.A."/>
            <person name="Markowitz V."/>
            <person name="Hugenholtz P."/>
            <person name="Kyrpides N.C."/>
            <person name="Klenk H.P."/>
        </authorList>
    </citation>
    <scope>NUCLEOTIDE SEQUENCE [LARGE SCALE GENOMIC DNA]</scope>
    <source>
        <strain>ATCC 51220 / DSM 2926 / LMG 16218 / CuHBu1</strain>
    </source>
</reference>